<protein>
    <recommendedName>
        <fullName>Putative F-box protein L166</fullName>
    </recommendedName>
</protein>
<feature type="chain" id="PRO_0000119987" description="Putative F-box protein L166">
    <location>
        <begin position="1"/>
        <end position="251"/>
    </location>
</feature>
<feature type="domain" description="F-box">
    <location>
        <begin position="1"/>
        <end position="46"/>
    </location>
</feature>
<feature type="region of interest" description="Disordered" evidence="1">
    <location>
        <begin position="188"/>
        <end position="251"/>
    </location>
</feature>
<feature type="compositionally biased region" description="Polar residues" evidence="1">
    <location>
        <begin position="202"/>
        <end position="217"/>
    </location>
</feature>
<feature type="compositionally biased region" description="Basic residues" evidence="1">
    <location>
        <begin position="241"/>
        <end position="251"/>
    </location>
</feature>
<keyword id="KW-1185">Reference proteome</keyword>
<name>YL166_MIMIV</name>
<organismHost>
    <name type="scientific">Acanthamoeba polyphaga</name>
    <name type="common">Amoeba</name>
    <dbReference type="NCBI Taxonomy" id="5757"/>
</organismHost>
<accession>Q5UPM7</accession>
<dbReference type="EMBL" id="AY653733">
    <property type="protein sequence ID" value="AAV50440.1"/>
    <property type="molecule type" value="Genomic_DNA"/>
</dbReference>
<dbReference type="Proteomes" id="UP000001134">
    <property type="component" value="Genome"/>
</dbReference>
<dbReference type="CDD" id="cd09917">
    <property type="entry name" value="F-box_SF"/>
    <property type="match status" value="1"/>
</dbReference>
<dbReference type="InterPro" id="IPR001810">
    <property type="entry name" value="F-box_dom"/>
</dbReference>
<dbReference type="Pfam" id="PF00646">
    <property type="entry name" value="F-box"/>
    <property type="match status" value="1"/>
</dbReference>
<dbReference type="SMART" id="SM00256">
    <property type="entry name" value="FBOX"/>
    <property type="match status" value="1"/>
</dbReference>
<evidence type="ECO:0000256" key="1">
    <source>
        <dbReference type="SAM" id="MobiDB-lite"/>
    </source>
</evidence>
<proteinExistence type="predicted"/>
<reference key="1">
    <citation type="journal article" date="2004" name="Science">
        <title>The 1.2-megabase genome sequence of Mimivirus.</title>
        <authorList>
            <person name="Raoult D."/>
            <person name="Audic S."/>
            <person name="Robert C."/>
            <person name="Abergel C."/>
            <person name="Renesto P."/>
            <person name="Ogata H."/>
            <person name="La Scola B."/>
            <person name="Susan M."/>
            <person name="Claverie J.-M."/>
        </authorList>
    </citation>
    <scope>NUCLEOTIDE SEQUENCE [LARGE SCALE GENOMIC DNA]</scope>
    <source>
        <strain>Rowbotham-Bradford</strain>
    </source>
</reference>
<sequence length="251" mass="30360">MDNICELFDEILPLIIEYLSDHDKVKFMTTCSRLYYFIDKVYYENIYDYNKIYHLEFTERFKRIRFCAINESIPSVITDLTLDREFTGSLGNCKFPRLTYIKLSQSQYDTNKNYIPSNIEIDIPNPFKNFHLTEFDMSKLFDDSYYIFSGTYMGSSSWYSTKTILRSRNFLSYYWNLDIVNYDRLESPEPESQENFRPIFPTESNNNKPVNKSQPQIKKSRSQKKFDKFYYQKKIVSNNNKRPKSFMKYRR</sequence>
<organism>
    <name type="scientific">Acanthamoeba polyphaga mimivirus</name>
    <name type="common">APMV</name>
    <dbReference type="NCBI Taxonomy" id="212035"/>
    <lineage>
        <taxon>Viruses</taxon>
        <taxon>Varidnaviria</taxon>
        <taxon>Bamfordvirae</taxon>
        <taxon>Nucleocytoviricota</taxon>
        <taxon>Megaviricetes</taxon>
        <taxon>Imitervirales</taxon>
        <taxon>Mimiviridae</taxon>
        <taxon>Megamimivirinae</taxon>
        <taxon>Mimivirus</taxon>
        <taxon>Mimivirus bradfordmassiliense</taxon>
    </lineage>
</organism>
<gene>
    <name type="ordered locus">MIMI_L166</name>
</gene>